<feature type="chain" id="PRO_0000184862" description="3-methyl-2-oxobutanoate hydroxymethyltransferase">
    <location>
        <begin position="1"/>
        <end position="286"/>
    </location>
</feature>
<feature type="active site" description="Proton acceptor" evidence="1">
    <location>
        <position position="204"/>
    </location>
</feature>
<feature type="binding site" evidence="1">
    <location>
        <begin position="67"/>
        <end position="68"/>
    </location>
    <ligand>
        <name>3-methyl-2-oxobutanoate</name>
        <dbReference type="ChEBI" id="CHEBI:11851"/>
    </ligand>
</feature>
<feature type="binding site" evidence="1">
    <location>
        <position position="67"/>
    </location>
    <ligand>
        <name>Mg(2+)</name>
        <dbReference type="ChEBI" id="CHEBI:18420"/>
    </ligand>
</feature>
<feature type="binding site" evidence="1">
    <location>
        <position position="106"/>
    </location>
    <ligand>
        <name>3-methyl-2-oxobutanoate</name>
        <dbReference type="ChEBI" id="CHEBI:11851"/>
    </ligand>
</feature>
<feature type="binding site" evidence="1">
    <location>
        <position position="106"/>
    </location>
    <ligand>
        <name>Mg(2+)</name>
        <dbReference type="ChEBI" id="CHEBI:18420"/>
    </ligand>
</feature>
<feature type="binding site" evidence="1">
    <location>
        <position position="136"/>
    </location>
    <ligand>
        <name>3-methyl-2-oxobutanoate</name>
        <dbReference type="ChEBI" id="CHEBI:11851"/>
    </ligand>
</feature>
<feature type="binding site" evidence="1">
    <location>
        <position position="138"/>
    </location>
    <ligand>
        <name>Mg(2+)</name>
        <dbReference type="ChEBI" id="CHEBI:18420"/>
    </ligand>
</feature>
<sequence length="286" mass="30011">MSEQNVNVYGADPSTSSIQSIQRTKIRTKHLQKMKAEGHKWAMLTAYDYSTARVFDEAGIPVLLVGDSAANVVYGYDTTVPVSADELLPLVRGVVRGAGHALVVADLPFGSYEPGPTAALAVATRFMKEGGAHAVKLEGGQRVAEQIACLTAAGIPVMAHIGFTPQSVNSLGGFRVQGRGGDAEQTVADAVAVAEAGAFSVVMEMVPTELATQITGKLTIPTIGIGAGLNCDAQVLVWQDMAGLSSGKVARFVKQYADIAGELRRAAMQYAEEVASAVFPAEEHCF</sequence>
<proteinExistence type="inferred from homology"/>
<reference key="1">
    <citation type="journal article" date="2001" name="Nature">
        <title>Massive gene decay in the leprosy bacillus.</title>
        <authorList>
            <person name="Cole S.T."/>
            <person name="Eiglmeier K."/>
            <person name="Parkhill J."/>
            <person name="James K.D."/>
            <person name="Thomson N.R."/>
            <person name="Wheeler P.R."/>
            <person name="Honore N."/>
            <person name="Garnier T."/>
            <person name="Churcher C.M."/>
            <person name="Harris D.E."/>
            <person name="Mungall K.L."/>
            <person name="Basham D."/>
            <person name="Brown D."/>
            <person name="Chillingworth T."/>
            <person name="Connor R."/>
            <person name="Davies R.M."/>
            <person name="Devlin K."/>
            <person name="Duthoy S."/>
            <person name="Feltwell T."/>
            <person name="Fraser A."/>
            <person name="Hamlin N."/>
            <person name="Holroyd S."/>
            <person name="Hornsby T."/>
            <person name="Jagels K."/>
            <person name="Lacroix C."/>
            <person name="Maclean J."/>
            <person name="Moule S."/>
            <person name="Murphy L.D."/>
            <person name="Oliver K."/>
            <person name="Quail M.A."/>
            <person name="Rajandream M.A."/>
            <person name="Rutherford K.M."/>
            <person name="Rutter S."/>
            <person name="Seeger K."/>
            <person name="Simon S."/>
            <person name="Simmonds M."/>
            <person name="Skelton J."/>
            <person name="Squares R."/>
            <person name="Squares S."/>
            <person name="Stevens K."/>
            <person name="Taylor K."/>
            <person name="Whitehead S."/>
            <person name="Woodward J.R."/>
            <person name="Barrell B.G."/>
        </authorList>
    </citation>
    <scope>NUCLEOTIDE SEQUENCE [LARGE SCALE GENOMIC DNA]</scope>
    <source>
        <strain>TN</strain>
    </source>
</reference>
<evidence type="ECO:0000255" key="1">
    <source>
        <dbReference type="HAMAP-Rule" id="MF_00156"/>
    </source>
</evidence>
<organism>
    <name type="scientific">Mycobacterium leprae (strain TN)</name>
    <dbReference type="NCBI Taxonomy" id="272631"/>
    <lineage>
        <taxon>Bacteria</taxon>
        <taxon>Bacillati</taxon>
        <taxon>Actinomycetota</taxon>
        <taxon>Actinomycetes</taxon>
        <taxon>Mycobacteriales</taxon>
        <taxon>Mycobacteriaceae</taxon>
        <taxon>Mycobacterium</taxon>
    </lineage>
</organism>
<keyword id="KW-0963">Cytoplasm</keyword>
<keyword id="KW-0460">Magnesium</keyword>
<keyword id="KW-0479">Metal-binding</keyword>
<keyword id="KW-0566">Pantothenate biosynthesis</keyword>
<keyword id="KW-1185">Reference proteome</keyword>
<keyword id="KW-0808">Transferase</keyword>
<comment type="function">
    <text evidence="1">Catalyzes the reversible reaction in which hydroxymethyl group from 5,10-methylenetetrahydrofolate is transferred onto alpha-ketoisovalerate to form ketopantoate.</text>
</comment>
<comment type="catalytic activity">
    <reaction evidence="1">
        <text>3-methyl-2-oxobutanoate + (6R)-5,10-methylene-5,6,7,8-tetrahydrofolate + H2O = 2-dehydropantoate + (6S)-5,6,7,8-tetrahydrofolate</text>
        <dbReference type="Rhea" id="RHEA:11824"/>
        <dbReference type="ChEBI" id="CHEBI:11561"/>
        <dbReference type="ChEBI" id="CHEBI:11851"/>
        <dbReference type="ChEBI" id="CHEBI:15377"/>
        <dbReference type="ChEBI" id="CHEBI:15636"/>
        <dbReference type="ChEBI" id="CHEBI:57453"/>
        <dbReference type="EC" id="2.1.2.11"/>
    </reaction>
</comment>
<comment type="cofactor">
    <cofactor evidence="1">
        <name>Mg(2+)</name>
        <dbReference type="ChEBI" id="CHEBI:18420"/>
    </cofactor>
    <text evidence="1">Binds 1 Mg(2+) ion per subunit.</text>
</comment>
<comment type="pathway">
    <text evidence="1">Cofactor biosynthesis; (R)-pantothenate biosynthesis; (R)-pantoate from 3-methyl-2-oxobutanoate: step 1/2.</text>
</comment>
<comment type="subunit">
    <text evidence="1">Homodecamer; pentamer of dimers.</text>
</comment>
<comment type="subcellular location">
    <subcellularLocation>
        <location evidence="1">Cytoplasm</location>
    </subcellularLocation>
</comment>
<comment type="similarity">
    <text evidence="1">Belongs to the PanB family.</text>
</comment>
<name>PANB_MYCLE</name>
<protein>
    <recommendedName>
        <fullName evidence="1">3-methyl-2-oxobutanoate hydroxymethyltransferase</fullName>
        <ecNumber evidence="1">2.1.2.11</ecNumber>
    </recommendedName>
    <alternativeName>
        <fullName evidence="1">Ketopantoate hydroxymethyltransferase</fullName>
        <shortName evidence="1">KPHMT</shortName>
    </alternativeName>
</protein>
<accession>Q9CBT0</accession>
<gene>
    <name evidence="1" type="primary">panB</name>
    <name type="ordered locus">ML1635</name>
</gene>
<dbReference type="EC" id="2.1.2.11" evidence="1"/>
<dbReference type="EMBL" id="AL583922">
    <property type="protein sequence ID" value="CAC30586.1"/>
    <property type="molecule type" value="Genomic_DNA"/>
</dbReference>
<dbReference type="PIR" id="E87113">
    <property type="entry name" value="E87113"/>
</dbReference>
<dbReference type="RefSeq" id="NP_302126.1">
    <property type="nucleotide sequence ID" value="NC_002677.1"/>
</dbReference>
<dbReference type="RefSeq" id="WP_010908447.1">
    <property type="nucleotide sequence ID" value="NC_002677.1"/>
</dbReference>
<dbReference type="SMR" id="Q9CBT0"/>
<dbReference type="STRING" id="272631.gene:17575476"/>
<dbReference type="KEGG" id="mle:ML1635"/>
<dbReference type="PATRIC" id="fig|272631.5.peg.3081"/>
<dbReference type="Leproma" id="ML1635"/>
<dbReference type="eggNOG" id="COG0413">
    <property type="taxonomic scope" value="Bacteria"/>
</dbReference>
<dbReference type="HOGENOM" id="CLU_036645_1_0_11"/>
<dbReference type="OrthoDB" id="9781789at2"/>
<dbReference type="UniPathway" id="UPA00028">
    <property type="reaction ID" value="UER00003"/>
</dbReference>
<dbReference type="Proteomes" id="UP000000806">
    <property type="component" value="Chromosome"/>
</dbReference>
<dbReference type="GO" id="GO:0005737">
    <property type="term" value="C:cytoplasm"/>
    <property type="evidence" value="ECO:0007669"/>
    <property type="project" value="UniProtKB-SubCell"/>
</dbReference>
<dbReference type="GO" id="GO:0003864">
    <property type="term" value="F:3-methyl-2-oxobutanoate hydroxymethyltransferase activity"/>
    <property type="evidence" value="ECO:0007669"/>
    <property type="project" value="UniProtKB-UniRule"/>
</dbReference>
<dbReference type="GO" id="GO:0000287">
    <property type="term" value="F:magnesium ion binding"/>
    <property type="evidence" value="ECO:0007669"/>
    <property type="project" value="TreeGrafter"/>
</dbReference>
<dbReference type="GO" id="GO:0015940">
    <property type="term" value="P:pantothenate biosynthetic process"/>
    <property type="evidence" value="ECO:0007669"/>
    <property type="project" value="UniProtKB-UniRule"/>
</dbReference>
<dbReference type="CDD" id="cd06557">
    <property type="entry name" value="KPHMT-like"/>
    <property type="match status" value="1"/>
</dbReference>
<dbReference type="FunFam" id="3.20.20.60:FF:000003">
    <property type="entry name" value="3-methyl-2-oxobutanoate hydroxymethyltransferase"/>
    <property type="match status" value="1"/>
</dbReference>
<dbReference type="Gene3D" id="3.20.20.60">
    <property type="entry name" value="Phosphoenolpyruvate-binding domains"/>
    <property type="match status" value="1"/>
</dbReference>
<dbReference type="HAMAP" id="MF_00156">
    <property type="entry name" value="PanB"/>
    <property type="match status" value="1"/>
</dbReference>
<dbReference type="InterPro" id="IPR003700">
    <property type="entry name" value="Pantoate_hydroxy_MeTrfase"/>
</dbReference>
<dbReference type="InterPro" id="IPR015813">
    <property type="entry name" value="Pyrv/PenolPyrv_kinase-like_dom"/>
</dbReference>
<dbReference type="InterPro" id="IPR040442">
    <property type="entry name" value="Pyrv_kinase-like_dom_sf"/>
</dbReference>
<dbReference type="NCBIfam" id="TIGR00222">
    <property type="entry name" value="panB"/>
    <property type="match status" value="1"/>
</dbReference>
<dbReference type="NCBIfam" id="NF001452">
    <property type="entry name" value="PRK00311.1"/>
    <property type="match status" value="1"/>
</dbReference>
<dbReference type="PANTHER" id="PTHR20881">
    <property type="entry name" value="3-METHYL-2-OXOBUTANOATE HYDROXYMETHYLTRANSFERASE"/>
    <property type="match status" value="1"/>
</dbReference>
<dbReference type="PANTHER" id="PTHR20881:SF0">
    <property type="entry name" value="3-METHYL-2-OXOBUTANOATE HYDROXYMETHYLTRANSFERASE"/>
    <property type="match status" value="1"/>
</dbReference>
<dbReference type="Pfam" id="PF02548">
    <property type="entry name" value="Pantoate_transf"/>
    <property type="match status" value="1"/>
</dbReference>
<dbReference type="PIRSF" id="PIRSF000388">
    <property type="entry name" value="Pantoate_hydroxy_MeTrfase"/>
    <property type="match status" value="1"/>
</dbReference>
<dbReference type="SUPFAM" id="SSF51621">
    <property type="entry name" value="Phosphoenolpyruvate/pyruvate domain"/>
    <property type="match status" value="1"/>
</dbReference>